<keyword id="KW-0002">3D-structure</keyword>
<keyword id="KW-0067">ATP-binding</keyword>
<keyword id="KW-0175">Coiled coil</keyword>
<keyword id="KW-0963">Cytoplasm</keyword>
<keyword id="KW-0547">Nucleotide-binding</keyword>
<keyword id="KW-0539">Nucleus</keyword>
<keyword id="KW-0597">Phosphoprotein</keyword>
<keyword id="KW-1267">Proteomics identification</keyword>
<keyword id="KW-1185">Reference proteome</keyword>
<keyword id="KW-0808">Transferase</keyword>
<keyword id="KW-0813">Transport</keyword>
<keyword id="KW-0832">Ubl conjugation</keyword>
<keyword id="KW-0833">Ubl conjugation pathway</keyword>
<reference key="1">
    <citation type="journal article" date="2000" name="DNA Res.">
        <title>Prediction of the coding sequences of unidentified human genes. XIX. The complete sequences of 100 new cDNA clones from brain which code for large proteins in vitro.</title>
        <authorList>
            <person name="Nagase T."/>
            <person name="Kikuno R."/>
            <person name="Hattori A."/>
            <person name="Kondo Y."/>
            <person name="Okumura K."/>
            <person name="Ohara O."/>
        </authorList>
    </citation>
    <scope>NUCLEOTIDE SEQUENCE [LARGE SCALE MRNA]</scope>
    <scope>VARIANT SER-1207</scope>
    <source>
        <tissue>Brain</tissue>
    </source>
</reference>
<reference key="2">
    <citation type="journal article" date="2006" name="Nature">
        <title>DNA sequence of human chromosome 17 and analysis of rearrangement in the human lineage.</title>
        <authorList>
            <person name="Zody M.C."/>
            <person name="Garber M."/>
            <person name="Adams D.J."/>
            <person name="Sharpe T."/>
            <person name="Harrow J."/>
            <person name="Lupski J.R."/>
            <person name="Nicholson C."/>
            <person name="Searle S.M."/>
            <person name="Wilming L."/>
            <person name="Young S.K."/>
            <person name="Abouelleil A."/>
            <person name="Allen N.R."/>
            <person name="Bi W."/>
            <person name="Bloom T."/>
            <person name="Borowsky M.L."/>
            <person name="Bugalter B.E."/>
            <person name="Butler J."/>
            <person name="Chang J.L."/>
            <person name="Chen C.-K."/>
            <person name="Cook A."/>
            <person name="Corum B."/>
            <person name="Cuomo C.A."/>
            <person name="de Jong P.J."/>
            <person name="DeCaprio D."/>
            <person name="Dewar K."/>
            <person name="FitzGerald M."/>
            <person name="Gilbert J."/>
            <person name="Gibson R."/>
            <person name="Gnerre S."/>
            <person name="Goldstein S."/>
            <person name="Grafham D.V."/>
            <person name="Grocock R."/>
            <person name="Hafez N."/>
            <person name="Hagopian D.S."/>
            <person name="Hart E."/>
            <person name="Norman C.H."/>
            <person name="Humphray S."/>
            <person name="Jaffe D.B."/>
            <person name="Jones M."/>
            <person name="Kamal M."/>
            <person name="Khodiyar V.K."/>
            <person name="LaButti K."/>
            <person name="Laird G."/>
            <person name="Lehoczky J."/>
            <person name="Liu X."/>
            <person name="Lokyitsang T."/>
            <person name="Loveland J."/>
            <person name="Lui A."/>
            <person name="Macdonald P."/>
            <person name="Major J.E."/>
            <person name="Matthews L."/>
            <person name="Mauceli E."/>
            <person name="McCarroll S.A."/>
            <person name="Mihalev A.H."/>
            <person name="Mudge J."/>
            <person name="Nguyen C."/>
            <person name="Nicol R."/>
            <person name="O'Leary S.B."/>
            <person name="Osoegawa K."/>
            <person name="Schwartz D.C."/>
            <person name="Shaw-Smith C."/>
            <person name="Stankiewicz P."/>
            <person name="Steward C."/>
            <person name="Swarbreck D."/>
            <person name="Venkataraman V."/>
            <person name="Whittaker C.A."/>
            <person name="Yang X."/>
            <person name="Zimmer A.R."/>
            <person name="Bradley A."/>
            <person name="Hubbard T."/>
            <person name="Birren B.W."/>
            <person name="Rogers J."/>
            <person name="Lander E.S."/>
            <person name="Nusbaum C."/>
        </authorList>
    </citation>
    <scope>NUCLEOTIDE SEQUENCE [LARGE SCALE GENOMIC DNA]</scope>
</reference>
<reference key="3">
    <citation type="submission" date="2005-07" db="EMBL/GenBank/DDBJ databases">
        <authorList>
            <person name="Mural R.J."/>
            <person name="Istrail S."/>
            <person name="Sutton G.G."/>
            <person name="Florea L."/>
            <person name="Halpern A.L."/>
            <person name="Mobarry C.M."/>
            <person name="Lippert R."/>
            <person name="Walenz B."/>
            <person name="Shatkay H."/>
            <person name="Dew I."/>
            <person name="Miller J.R."/>
            <person name="Flanigan M.J."/>
            <person name="Edwards N.J."/>
            <person name="Bolanos R."/>
            <person name="Fasulo D."/>
            <person name="Halldorsson B.V."/>
            <person name="Hannenhalli S."/>
            <person name="Turner R."/>
            <person name="Yooseph S."/>
            <person name="Lu F."/>
            <person name="Nusskern D.R."/>
            <person name="Shue B.C."/>
            <person name="Zheng X.H."/>
            <person name="Zhong F."/>
            <person name="Delcher A.L."/>
            <person name="Huson D.H."/>
            <person name="Kravitz S.A."/>
            <person name="Mouchard L."/>
            <person name="Reinert K."/>
            <person name="Remington K.A."/>
            <person name="Clark A.G."/>
            <person name="Waterman M.S."/>
            <person name="Eichler E.E."/>
            <person name="Adams M.D."/>
            <person name="Hunkapiller M.W."/>
            <person name="Myers E.W."/>
            <person name="Venter J.C."/>
        </authorList>
    </citation>
    <scope>NUCLEOTIDE SEQUENCE [LARGE SCALE GENOMIC DNA]</scope>
</reference>
<reference key="4">
    <citation type="journal article" date="2004" name="Genome Res.">
        <title>The status, quality, and expansion of the NIH full-length cDNA project: the Mammalian Gene Collection (MGC).</title>
        <authorList>
            <consortium name="The MGC Project Team"/>
        </authorList>
    </citation>
    <scope>NUCLEOTIDE SEQUENCE [LARGE SCALE MRNA] OF 270-1292</scope>
    <scope>VARIANT SER-1207</scope>
    <source>
        <tissue>Brain</tissue>
        <tissue>Skin</tissue>
    </source>
</reference>
<reference key="5">
    <citation type="journal article" date="2007" name="BMC Genomics">
        <title>The full-ORF clone resource of the German cDNA consortium.</title>
        <authorList>
            <person name="Bechtel S."/>
            <person name="Rosenfelder H."/>
            <person name="Duda A."/>
            <person name="Schmidt C.P."/>
            <person name="Ernst U."/>
            <person name="Wellenreuther R."/>
            <person name="Mehrle A."/>
            <person name="Schuster C."/>
            <person name="Bahr A."/>
            <person name="Bloecker H."/>
            <person name="Heubner D."/>
            <person name="Hoerlein A."/>
            <person name="Michel G."/>
            <person name="Wedler H."/>
            <person name="Koehrer K."/>
            <person name="Ottenwaelder B."/>
            <person name="Poustka A."/>
            <person name="Wiemann S."/>
            <person name="Schupp I."/>
        </authorList>
    </citation>
    <scope>NUCLEOTIDE SEQUENCE [LARGE SCALE MRNA] OF 338-1292</scope>
    <scope>VARIANT SER-1207</scope>
    <source>
        <tissue>Melanoma</tissue>
    </source>
</reference>
<reference key="6">
    <citation type="journal article" date="2004" name="Nat. Genet.">
        <title>Complete sequencing and characterization of 21,243 full-length human cDNAs.</title>
        <authorList>
            <person name="Ota T."/>
            <person name="Suzuki Y."/>
            <person name="Nishikawa T."/>
            <person name="Otsuki T."/>
            <person name="Sugiyama T."/>
            <person name="Irie R."/>
            <person name="Wakamatsu A."/>
            <person name="Hayashi K."/>
            <person name="Sato H."/>
            <person name="Nagai K."/>
            <person name="Kimura K."/>
            <person name="Makita H."/>
            <person name="Sekine M."/>
            <person name="Obayashi M."/>
            <person name="Nishi T."/>
            <person name="Shibahara T."/>
            <person name="Tanaka T."/>
            <person name="Ishii S."/>
            <person name="Yamamoto J."/>
            <person name="Saito K."/>
            <person name="Kawai Y."/>
            <person name="Isono Y."/>
            <person name="Nakamura Y."/>
            <person name="Nagahari K."/>
            <person name="Murakami K."/>
            <person name="Yasuda T."/>
            <person name="Iwayanagi T."/>
            <person name="Wagatsuma M."/>
            <person name="Shiratori A."/>
            <person name="Sudo H."/>
            <person name="Hosoiri T."/>
            <person name="Kaku Y."/>
            <person name="Kodaira H."/>
            <person name="Kondo H."/>
            <person name="Sugawara M."/>
            <person name="Takahashi M."/>
            <person name="Kanda K."/>
            <person name="Yokoi T."/>
            <person name="Furuya T."/>
            <person name="Kikkawa E."/>
            <person name="Omura Y."/>
            <person name="Abe K."/>
            <person name="Kamihara K."/>
            <person name="Katsuta N."/>
            <person name="Sato K."/>
            <person name="Tanikawa M."/>
            <person name="Yamazaki M."/>
            <person name="Ninomiya K."/>
            <person name="Ishibashi T."/>
            <person name="Yamashita H."/>
            <person name="Murakawa K."/>
            <person name="Fujimori K."/>
            <person name="Tanai H."/>
            <person name="Kimata M."/>
            <person name="Watanabe M."/>
            <person name="Hiraoka S."/>
            <person name="Chiba Y."/>
            <person name="Ishida S."/>
            <person name="Ono Y."/>
            <person name="Takiguchi S."/>
            <person name="Watanabe S."/>
            <person name="Yosida M."/>
            <person name="Hotuta T."/>
            <person name="Kusano J."/>
            <person name="Kanehori K."/>
            <person name="Takahashi-Fujii A."/>
            <person name="Hara H."/>
            <person name="Tanase T.-O."/>
            <person name="Nomura Y."/>
            <person name="Togiya S."/>
            <person name="Komai F."/>
            <person name="Hara R."/>
            <person name="Takeuchi K."/>
            <person name="Arita M."/>
            <person name="Imose N."/>
            <person name="Musashino K."/>
            <person name="Yuuki H."/>
            <person name="Oshima A."/>
            <person name="Sasaki N."/>
            <person name="Aotsuka S."/>
            <person name="Yoshikawa Y."/>
            <person name="Matsunawa H."/>
            <person name="Ichihara T."/>
            <person name="Shiohata N."/>
            <person name="Sano S."/>
            <person name="Moriya S."/>
            <person name="Momiyama H."/>
            <person name="Satoh N."/>
            <person name="Takami S."/>
            <person name="Terashima Y."/>
            <person name="Suzuki O."/>
            <person name="Nakagawa S."/>
            <person name="Senoh A."/>
            <person name="Mizoguchi H."/>
            <person name="Goto Y."/>
            <person name="Shimizu F."/>
            <person name="Wakebe H."/>
            <person name="Hishigaki H."/>
            <person name="Watanabe T."/>
            <person name="Sugiyama A."/>
            <person name="Takemoto M."/>
            <person name="Kawakami B."/>
            <person name="Yamazaki M."/>
            <person name="Watanabe K."/>
            <person name="Kumagai A."/>
            <person name="Itakura S."/>
            <person name="Fukuzumi Y."/>
            <person name="Fujimori Y."/>
            <person name="Komiyama M."/>
            <person name="Tashiro H."/>
            <person name="Tanigami A."/>
            <person name="Fujiwara T."/>
            <person name="Ono T."/>
            <person name="Yamada K."/>
            <person name="Fujii Y."/>
            <person name="Ozaki K."/>
            <person name="Hirao M."/>
            <person name="Ohmori Y."/>
            <person name="Kawabata A."/>
            <person name="Hikiji T."/>
            <person name="Kobatake N."/>
            <person name="Inagaki H."/>
            <person name="Ikema Y."/>
            <person name="Okamoto S."/>
            <person name="Okitani R."/>
            <person name="Kawakami T."/>
            <person name="Noguchi S."/>
            <person name="Itoh T."/>
            <person name="Shigeta K."/>
            <person name="Senba T."/>
            <person name="Matsumura K."/>
            <person name="Nakajima Y."/>
            <person name="Mizuno T."/>
            <person name="Morinaga M."/>
            <person name="Sasaki M."/>
            <person name="Togashi T."/>
            <person name="Oyama M."/>
            <person name="Hata H."/>
            <person name="Watanabe M."/>
            <person name="Komatsu T."/>
            <person name="Mizushima-Sugano J."/>
            <person name="Satoh T."/>
            <person name="Shirai Y."/>
            <person name="Takahashi Y."/>
            <person name="Nakagawa K."/>
            <person name="Okumura K."/>
            <person name="Nagase T."/>
            <person name="Nomura N."/>
            <person name="Kikuchi H."/>
            <person name="Masuho Y."/>
            <person name="Yamashita R."/>
            <person name="Nakai K."/>
            <person name="Yada T."/>
            <person name="Nakamura Y."/>
            <person name="Ohara O."/>
            <person name="Isogai T."/>
            <person name="Sugano S."/>
        </authorList>
    </citation>
    <scope>NUCLEOTIDE SEQUENCE [LARGE SCALE MRNA] OF 448-1292</scope>
    <scope>VARIANT SER-1207</scope>
</reference>
<reference key="7">
    <citation type="journal article" date="2001" name="Gene">
        <title>Identification, tissue expression, and chromosomal position of a novel gene encoding human ubiquitin-conjugating enzyme E2-230k.</title>
        <authorList>
            <person name="Yokota T."/>
            <person name="Nagai H."/>
            <person name="Harada H."/>
            <person name="Mine N."/>
            <person name="Terada Y."/>
            <person name="Fujiwara H."/>
            <person name="Yabe A."/>
            <person name="Miyazaki K."/>
            <person name="Emi M."/>
        </authorList>
    </citation>
    <scope>IDENTIFICATION</scope>
    <scope>TISSUE SPECIFICITY</scope>
</reference>
<reference key="8">
    <citation type="journal article" date="2008" name="J. Proteome Res.">
        <title>Combining protein-based IMAC, peptide-based IMAC, and MudPIT for efficient phosphoproteomic analysis.</title>
        <authorList>
            <person name="Cantin G.T."/>
            <person name="Yi W."/>
            <person name="Lu B."/>
            <person name="Park S.K."/>
            <person name="Xu T."/>
            <person name="Lee J.-D."/>
            <person name="Yates J.R. III"/>
        </authorList>
    </citation>
    <scope>IDENTIFICATION BY MASS SPECTROMETRY [LARGE SCALE ANALYSIS]</scope>
    <source>
        <tissue>Cervix carcinoma</tissue>
    </source>
</reference>
<reference key="9">
    <citation type="journal article" date="2008" name="Proc. Natl. Acad. Sci. U.S.A.">
        <title>A quantitative atlas of mitotic phosphorylation.</title>
        <authorList>
            <person name="Dephoure N."/>
            <person name="Zhou C."/>
            <person name="Villen J."/>
            <person name="Beausoleil S.A."/>
            <person name="Bakalarski C.E."/>
            <person name="Elledge S.J."/>
            <person name="Gygi S.P."/>
        </authorList>
    </citation>
    <scope>PHOSPHORYLATION [LARGE SCALE ANALYSIS] AT SER-399; SER-401; SER-441 AND SER-836</scope>
    <scope>IDENTIFICATION BY MASS SPECTROMETRY [LARGE SCALE ANALYSIS]</scope>
    <source>
        <tissue>Cervix carcinoma</tissue>
    </source>
</reference>
<reference key="10">
    <citation type="journal article" date="2009" name="Anal. Chem.">
        <title>Lys-N and trypsin cover complementary parts of the phosphoproteome in a refined SCX-based approach.</title>
        <authorList>
            <person name="Gauci S."/>
            <person name="Helbig A.O."/>
            <person name="Slijper M."/>
            <person name="Krijgsveld J."/>
            <person name="Heck A.J."/>
            <person name="Mohammed S."/>
        </authorList>
    </citation>
    <scope>IDENTIFICATION BY MASS SPECTROMETRY [LARGE SCALE ANALYSIS]</scope>
</reference>
<reference key="11">
    <citation type="journal article" date="2009" name="Sci. Signal.">
        <title>Quantitative phosphoproteomic analysis of T cell receptor signaling reveals system-wide modulation of protein-protein interactions.</title>
        <authorList>
            <person name="Mayya V."/>
            <person name="Lundgren D.H."/>
            <person name="Hwang S.-I."/>
            <person name="Rezaul K."/>
            <person name="Wu L."/>
            <person name="Eng J.K."/>
            <person name="Rodionov V."/>
            <person name="Han D.K."/>
        </authorList>
    </citation>
    <scope>PHOSPHORYLATION [LARGE SCALE ANALYSIS] AT SER-87 AND SER-836</scope>
    <scope>IDENTIFICATION BY MASS SPECTROMETRY [LARGE SCALE ANALYSIS]</scope>
    <source>
        <tissue>Leukemic T-cell</tissue>
    </source>
</reference>
<reference key="12">
    <citation type="journal article" date="2010" name="Sci. Signal.">
        <title>Quantitative phosphoproteomics reveals widespread full phosphorylation site occupancy during mitosis.</title>
        <authorList>
            <person name="Olsen J.V."/>
            <person name="Vermeulen M."/>
            <person name="Santamaria A."/>
            <person name="Kumar C."/>
            <person name="Miller M.L."/>
            <person name="Jensen L.J."/>
            <person name="Gnad F."/>
            <person name="Cox J."/>
            <person name="Jensen T.S."/>
            <person name="Nigg E.A."/>
            <person name="Brunak S."/>
            <person name="Mann M."/>
        </authorList>
    </citation>
    <scope>PHOSPHORYLATION [LARGE SCALE ANALYSIS] AT SER-87 AND SER-89</scope>
    <scope>IDENTIFICATION BY MASS SPECTROMETRY [LARGE SCALE ANALYSIS]</scope>
    <source>
        <tissue>Cervix carcinoma</tissue>
    </source>
</reference>
<reference key="13">
    <citation type="journal article" date="2011" name="BMC Syst. Biol.">
        <title>Initial characterization of the human central proteome.</title>
        <authorList>
            <person name="Burkard T.R."/>
            <person name="Planyavsky M."/>
            <person name="Kaupe I."/>
            <person name="Breitwieser F.P."/>
            <person name="Buerckstuemmer T."/>
            <person name="Bennett K.L."/>
            <person name="Superti-Furga G."/>
            <person name="Colinge J."/>
        </authorList>
    </citation>
    <scope>IDENTIFICATION BY MASS SPECTROMETRY [LARGE SCALE ANALYSIS]</scope>
</reference>
<reference key="14">
    <citation type="journal article" date="2011" name="Sci. Signal.">
        <title>System-wide temporal characterization of the proteome and phosphoproteome of human embryonic stem cell differentiation.</title>
        <authorList>
            <person name="Rigbolt K.T."/>
            <person name="Prokhorova T.A."/>
            <person name="Akimov V."/>
            <person name="Henningsen J."/>
            <person name="Johansen P.T."/>
            <person name="Kratchmarova I."/>
            <person name="Kassem M."/>
            <person name="Mann M."/>
            <person name="Olsen J.V."/>
            <person name="Blagoev B."/>
        </authorList>
    </citation>
    <scope>PHOSPHORYLATION [LARGE SCALE ANALYSIS] AT SER-87; SER-89 AND SER-896</scope>
    <scope>IDENTIFICATION BY MASS SPECTROMETRY [LARGE SCALE ANALYSIS]</scope>
</reference>
<reference key="15">
    <citation type="journal article" date="2013" name="Cell">
        <title>Regulation of WASH-dependent actin polymerization and protein trafficking by ubiquitination.</title>
        <authorList>
            <person name="Hao Y.H."/>
            <person name="Doyle J.M."/>
            <person name="Ramanathan S."/>
            <person name="Gomez T.S."/>
            <person name="Jia D."/>
            <person name="Xu M."/>
            <person name="Chen Z.J."/>
            <person name="Billadeau D.D."/>
            <person name="Rosen M.K."/>
            <person name="Potts P.R."/>
        </authorList>
    </citation>
    <scope>FUNCTION</scope>
</reference>
<reference key="16">
    <citation type="journal article" date="2013" name="Cell Res.">
        <title>UBE2O negatively regulates TRAF6-mediated NF-kappaB activation by inhibiting TRAF6 polyubiquitination.</title>
        <authorList>
            <person name="Zhang X."/>
            <person name="Zhang J."/>
            <person name="Zhang L."/>
            <person name="van Dam H."/>
            <person name="ten Dijke P."/>
        </authorList>
    </citation>
    <scope>FUNCTION</scope>
</reference>
<reference key="17">
    <citation type="journal article" date="2013" name="EMBO J.">
        <title>Fine-tuning BMP7 signalling in adipogenesis by UBE2O/E2-230K-mediated monoubiquitination of SMAD6.</title>
        <authorList>
            <person name="Zhang X."/>
            <person name="Zhang J."/>
            <person name="Bauer A."/>
            <person name="Zhang L."/>
            <person name="Selinger D.W."/>
            <person name="Lu C.X."/>
            <person name="Ten Dijke P."/>
        </authorList>
    </citation>
    <scope>FUNCTION</scope>
    <scope>CATALYTIC ACTIVITY</scope>
    <scope>MUTAGENESIS OF CYS-1040</scope>
</reference>
<reference key="18">
    <citation type="journal article" date="2013" name="J. Proteome Res.">
        <title>Toward a comprehensive characterization of a human cancer cell phosphoproteome.</title>
        <authorList>
            <person name="Zhou H."/>
            <person name="Di Palma S."/>
            <person name="Preisinger C."/>
            <person name="Peng M."/>
            <person name="Polat A.N."/>
            <person name="Heck A.J."/>
            <person name="Mohammed S."/>
        </authorList>
    </citation>
    <scope>PHOSPHORYLATION [LARGE SCALE ANALYSIS] AT SER-87; SER-89; SER-399; SER-401; SER-515; SER-836 AND SER-896</scope>
    <scope>IDENTIFICATION BY MASS SPECTROMETRY [LARGE SCALE ANALYSIS]</scope>
    <source>
        <tissue>Cervix carcinoma</tissue>
        <tissue>Erythroleukemia</tissue>
    </source>
</reference>
<reference key="19">
    <citation type="journal article" date="2014" name="J. Proteomics">
        <title>An enzyme assisted RP-RPLC approach for in-depth analysis of human liver phosphoproteome.</title>
        <authorList>
            <person name="Bian Y."/>
            <person name="Song C."/>
            <person name="Cheng K."/>
            <person name="Dong M."/>
            <person name="Wang F."/>
            <person name="Huang J."/>
            <person name="Sun D."/>
            <person name="Wang L."/>
            <person name="Ye M."/>
            <person name="Zou H."/>
        </authorList>
    </citation>
    <scope>PHOSPHORYLATION [LARGE SCALE ANALYSIS] AT SER-50; SER-87; SER-89; THR-488 AND THR-491</scope>
    <scope>IDENTIFICATION BY MASS SPECTROMETRY [LARGE SCALE ANALYSIS]</scope>
    <source>
        <tissue>Liver</tissue>
    </source>
</reference>
<reference key="20">
    <citation type="journal article" date="2014" name="Mol. Cell">
        <title>Autodeubiquitination protects the tumor suppressor BAP1 from cytoplasmic sequestration mediated by the atypical ubiquitin ligase UBE2O.</title>
        <authorList>
            <person name="Mashtalir N."/>
            <person name="Daou S."/>
            <person name="Barbour H."/>
            <person name="Sen N.N."/>
            <person name="Gagnon J."/>
            <person name="Hammond-Martel I."/>
            <person name="Dar H.H."/>
            <person name="Therrien M."/>
            <person name="Affar E.B."/>
        </authorList>
    </citation>
    <scope>FUNCTION</scope>
    <scope>SUBCELLULAR LOCATION</scope>
    <scope>CATALYTIC ACTIVITY</scope>
    <scope>ACTIVITY REGULATION</scope>
    <scope>PHOSPHORYLATION</scope>
    <scope>UBIQUITINATION</scope>
    <scope>NUCLEAR LOCALIZATION SIGNAL</scope>
    <scope>MUTAGENESIS OF CYS-1040</scope>
</reference>
<sequence length="1292" mass="141293">MADPAAPTPAAPAPAQAPAPAPEAVPAPAAAPVPAPAPASDSASGPSSDSGPEAGSQRLLFSHDLVSGRYRGSVHFGLVRLIHGEDSDSEGEEEGRGSSGCSEAGGAGHEEGRASPLRRGYVRVQWYPEGVKQHVKETKLKLEDRSVVPRDVVRHMRSTDSQCGTVIDVNIDCAVKLIGTNCIIYPVNSKDLQHIWPFMYGDYIAYDCWLGKVYDLKNQIILKLSNGARCSMNTEDGAKLYDVCPHVSDSGLFFDDSYGFYPGQVLIGPAKIFSSVQWLSGVKPVLSTKSKFRVVVEEVQVVELKVTWITKSFCPGGTDSVSPPPSVITQENLGRVKRLGCFDHAQRQLGERCLYVFPAKVEPAKIAWECPEKNCAQGEGSMAKKVKRLLKKQVVRIMSCSPDTQCSRDHSMEDPDKKGESKTKSEAESASPEETPDGSASPVEMQDEGAEEPHEAGEQLPPFLLKEGRDDRLHSAEQDADDEAADDTDDTSSVTSSASSTTSSQSGSGTSRKKSIPLSIKNLKRKHKRKKNKITRDFKPGDRVAVEVVTTMTSADVMWQDGSVECNIRSNDLFPVHHLDNNEFCPGDFVVDKRVQSCPDPAVYGVVQSGDHIGRTCMVKWFKLRPSGDDVELIGEEEDVSVYDIADHPDFRFRTTDIVIRIGNTEDGAPHKEDEPSVGQVARVDVSSKVEVVWADNSKTIILPQHLYNIESEIEESDYDSVEGSTSGASSDEWEDDSDSWETDNGLVEDEHPKIEEPPIPPLEQPVAPEDKGVVISEEAATAAVQGAVAMAAPMAGLMEKAGKDGPPKSFRELKEAIKILESLKNMTVEQLLTGSPTSPTVEPEKPTREKKFLDDIKKLQENLKKTLDNVAIVEEEKMEAVPDVERKEDKPEGQSPVKAEWPSETPVLCQQCGGKPGVTFTSAKGEVFSVLEFAPSNHSFKKIEFQPPEAKKFFSTVRKEMALLATSLPEGIMVKTFEDRMDLFSALIKGPTRTPYEDGLYLFDIQLPNIYPAVPPHFCYLSQCSGRLNPNLYDNGKVCVSLLGTWIGKGTERWTSKSSLLQVLISIQGLILVNEPYYNEAGFDSDRGLQEGYENSRCYNEMALIRVVQSMTQLVRRPPEVFEQEIRQHFSTGGWRLVNRIESWLETHALLEKAQALPNGVPKASSSPEPPAVAELSDSGQQEPEDGGPAPGEASQGSDSEGGAQGLASASRDHTDQTSETAPDASVPPSVKPKKRRKSYRSFLPEKSGYPDIGFPLFPLSKGFIKSIRGVLTQFRAALLEAGMPECTEDK</sequence>
<organism>
    <name type="scientific">Homo sapiens</name>
    <name type="common">Human</name>
    <dbReference type="NCBI Taxonomy" id="9606"/>
    <lineage>
        <taxon>Eukaryota</taxon>
        <taxon>Metazoa</taxon>
        <taxon>Chordata</taxon>
        <taxon>Craniata</taxon>
        <taxon>Vertebrata</taxon>
        <taxon>Euteleostomi</taxon>
        <taxon>Mammalia</taxon>
        <taxon>Eutheria</taxon>
        <taxon>Euarchontoglires</taxon>
        <taxon>Primates</taxon>
        <taxon>Haplorrhini</taxon>
        <taxon>Catarrhini</taxon>
        <taxon>Hominidae</taxon>
        <taxon>Homo</taxon>
    </lineage>
</organism>
<protein>
    <recommendedName>
        <fullName>(E3-independent) E2 ubiquitin-conjugating enzyme</fullName>
        <ecNumber evidence="12 13">2.3.2.24</ecNumber>
    </recommendedName>
    <alternativeName>
        <fullName>E2/E3 hybrid ubiquitin-protein ligase UBE2O</fullName>
    </alternativeName>
    <alternativeName>
        <fullName>Ubiquitin carrier protein O</fullName>
    </alternativeName>
    <alternativeName>
        <fullName>Ubiquitin-conjugating enzyme E2 O</fullName>
    </alternativeName>
    <alternativeName>
        <fullName>Ubiquitin-conjugating enzyme E2 of 230 kDa</fullName>
        <shortName>Ubiquitin-conjugating enzyme E2-230K</shortName>
    </alternativeName>
    <alternativeName>
        <fullName>Ubiquitin-protein ligase O</fullName>
    </alternativeName>
</protein>
<comment type="function">
    <text evidence="10 11 12 13">E2/E3 hybrid ubiquitin-protein ligase that displays both E2 and E3 ligase activities and mediates monoubiquitination of target proteins (PubMed:23455153, PubMed:24703950). Negatively regulates TRAF6-mediated NF-kappa-B activation independently of its E2 activity (PubMed:23381138). Acts as a positive regulator of BMP7 signaling by mediating monoubiquitination of SMAD6, thereby regulating adipogenesis (PubMed:23455153). Mediates monoubiquitination at different sites of the nuclear localization signal (NLS) of BAP1, leading to cytoplasmic retention of BAP1. Also able to monoubiquitinate the NLS of other chromatin-associated proteins, such as INO80 and CXXC1, affecting their subcellular location (PubMed:24703950). Acts as a regulator of retrograde transport by assisting the TRIM27:MAGEL2 E3 ubiquitin ligase complex to mediate 'Lys-63'-linked ubiquitination of WASHC1, leading to promote endosomal F-actin assembly (PubMed:23452853).</text>
</comment>
<comment type="catalytic activity">
    <reaction evidence="3 12 13">
        <text>S-ubiquitinyl-[E1 ubiquitin-activating enzyme]-L-cysteine + [acceptor protein]-L-lysine = [E1 ubiquitin-activating enzyme]-L-cysteine + N(6)-monoubiquitinyl-[acceptor protein]-L-lysine.</text>
        <dbReference type="EC" id="2.3.2.24"/>
    </reaction>
</comment>
<comment type="activity regulation">
    <text evidence="13">inhibited by phenylarsine oxide (PAO).</text>
</comment>
<comment type="pathway">
    <text evidence="3">Protein modification; protein ubiquitination.</text>
</comment>
<comment type="subunit">
    <text evidence="1">Interacts with CPNE1 (via VWFA domain) and CPNE4 (via VWFA domain). Interacts with UBR2.</text>
</comment>
<comment type="interaction">
    <interactant intactId="EBI-2339946">
        <id>Q9C0C9</id>
    </interactant>
    <interactant intactId="EBI-296058">
        <id>P31751</id>
        <label>AKT2</label>
    </interactant>
    <organismsDiffer>false</organismsDiffer>
    <experiments>4</experiments>
</comment>
<comment type="interaction">
    <interactant intactId="EBI-2339946">
        <id>Q9C0C9</id>
    </interactant>
    <interactant intactId="EBI-741243">
        <id>Q9UKG1</id>
        <label>APPL1</label>
    </interactant>
    <organismsDiffer>false</organismsDiffer>
    <experiments>6</experiments>
</comment>
<comment type="interaction">
    <interactant intactId="EBI-2339946">
        <id>Q9C0C9</id>
    </interactant>
    <interactant intactId="EBI-356942">
        <id>P62879</id>
        <label>GNB2</label>
    </interactant>
    <organismsDiffer>false</organismsDiffer>
    <experiments>6</experiments>
</comment>
<comment type="interaction">
    <interactant intactId="EBI-2339946">
        <id>Q9C0C9</id>
    </interactant>
    <interactant intactId="EBI-2512448">
        <id>Q12894</id>
        <label>IFRD2</label>
    </interactant>
    <organismsDiffer>false</organismsDiffer>
    <experiments>3</experiments>
</comment>
<comment type="interaction">
    <interactant intactId="EBI-2339946">
        <id>Q9C0C9</id>
    </interactant>
    <interactant intactId="EBI-21251460">
        <id>O60260-5</id>
        <label>PRKN</label>
    </interactant>
    <organismsDiffer>false</organismsDiffer>
    <experiments>3</experiments>
</comment>
<comment type="interaction">
    <interactant intactId="EBI-2339946">
        <id>Q9C0C9</id>
    </interactant>
    <interactant intactId="EBI-12025260">
        <id>Q5VUG0</id>
        <label>SFMBT2</label>
    </interactant>
    <organismsDiffer>false</organismsDiffer>
    <experiments>8</experiments>
</comment>
<comment type="interaction">
    <interactant intactId="EBI-2339946">
        <id>Q9C0C9</id>
    </interactant>
    <interactant intactId="EBI-357304">
        <id>P62987</id>
        <label>UBA52</label>
    </interactant>
    <organismsDiffer>false</organismsDiffer>
    <experiments>3</experiments>
</comment>
<comment type="interaction">
    <interactant intactId="EBI-2339946">
        <id>Q9C0C9</id>
    </interactant>
    <interactant intactId="EBI-12157263">
        <id>P40337-2</id>
        <label>VHL</label>
    </interactant>
    <organismsDiffer>false</organismsDiffer>
    <experiments>3</experiments>
</comment>
<comment type="interaction">
    <interactant intactId="EBI-2339946">
        <id>Q9C0C9</id>
    </interactant>
    <interactant intactId="EBI-4321242">
        <id>O35182</id>
        <label>Smad6</label>
    </interactant>
    <organismsDiffer>true</organismsDiffer>
    <experiments>4</experiments>
</comment>
<comment type="interaction">
    <interactant intactId="EBI-2339946">
        <id>Q9C0C9</id>
    </interactant>
    <interactant intactId="EBI-5274835">
        <id>O35253</id>
        <label>Smad7</label>
    </interactant>
    <organismsDiffer>true</organismsDiffer>
    <experiments>2</experiments>
</comment>
<comment type="subcellular location">
    <subcellularLocation>
        <location evidence="13">Cytoplasm</location>
    </subcellularLocation>
    <subcellularLocation>
        <location evidence="13">Nucleus</location>
    </subcellularLocation>
    <text>Mainly localizes to the cytoplasm.</text>
</comment>
<comment type="tissue specificity">
    <text evidence="6">Predominantly expressed in skeletal muscle and heart.</text>
</comment>
<comment type="PTM">
    <text evidence="13">Phosphorylated. Phosphorylation affects subcellular location.</text>
</comment>
<comment type="PTM">
    <text evidence="13">Ubiquitinated: autoubiquitinates, possibly affecting its subcellular location.</text>
</comment>
<comment type="similarity">
    <text evidence="3">Belongs to the ubiquitin-conjugating enzyme family.</text>
</comment>
<comment type="sequence caution" evidence="14">
    <conflict type="erroneous initiation">
        <sequence resource="EMBL-CDS" id="AAH22237"/>
    </conflict>
    <text>Truncated N-terminus.</text>
</comment>
<comment type="sequence caution" evidence="14">
    <conflict type="erroneous initiation">
        <sequence resource="EMBL-CDS" id="AAH25977"/>
    </conflict>
    <text>Extended N-terminus.</text>
</comment>
<comment type="sequence caution" evidence="14">
    <conflict type="erroneous initiation">
        <sequence resource="EMBL-CDS" id="AAH36820"/>
    </conflict>
    <text>Extended N-terminus.</text>
</comment>
<comment type="sequence caution" evidence="14">
    <conflict type="erroneous initiation">
        <sequence resource="EMBL-CDS" id="AAH51868"/>
    </conflict>
    <text>Truncated N-terminus.</text>
</comment>
<comment type="sequence caution" evidence="14">
    <conflict type="erroneous initiation">
        <sequence resource="EMBL-CDS" id="BAB14320"/>
    </conflict>
    <text>Truncated N-terminus.</text>
</comment>
<comment type="sequence caution" evidence="14">
    <conflict type="erroneous initiation">
        <sequence resource="EMBL-CDS" id="BAB14948"/>
    </conflict>
    <text>Truncated N-terminus.</text>
</comment>
<comment type="sequence caution" evidence="14">
    <conflict type="erroneous initiation">
        <sequence resource="EMBL-CDS" id="BAB15313"/>
    </conflict>
    <text>Truncated N-terminus.</text>
</comment>
<comment type="sequence caution" evidence="14">
    <conflict type="erroneous initiation">
        <sequence resource="EMBL-CDS" id="BAB21825"/>
    </conflict>
    <text>Extended N-terminus.</text>
</comment>
<name>UBE2O_HUMAN</name>
<accession>Q9C0C9</accession>
<accession>A6NDU5</accession>
<accession>Q69YP4</accession>
<accession>Q6PIZ2</accession>
<accession>Q86UA4</accession>
<accession>Q8N425</accession>
<accession>Q8TBN1</accession>
<accession>Q9BSW1</accession>
<accession>Q9H6E6</accession>
<accession>Q9H7E4</accession>
<accession>Q9H9B2</accession>
<gene>
    <name type="primary">UBE2O</name>
    <name type="synonym">KIAA1734</name>
</gene>
<dbReference type="EC" id="2.3.2.24" evidence="12 13"/>
<dbReference type="EMBL" id="AB051521">
    <property type="protein sequence ID" value="BAB21825.1"/>
    <property type="status" value="ALT_INIT"/>
    <property type="molecule type" value="mRNA"/>
</dbReference>
<dbReference type="EMBL" id="AC090699">
    <property type="status" value="NOT_ANNOTATED_CDS"/>
    <property type="molecule type" value="Genomic_DNA"/>
</dbReference>
<dbReference type="EMBL" id="CH471099">
    <property type="protein sequence ID" value="EAW89396.1"/>
    <property type="molecule type" value="Genomic_DNA"/>
</dbReference>
<dbReference type="EMBL" id="BC004525">
    <property type="protein sequence ID" value="AAH04525.2"/>
    <property type="molecule type" value="mRNA"/>
</dbReference>
<dbReference type="EMBL" id="BC022237">
    <property type="protein sequence ID" value="AAH22237.1"/>
    <property type="status" value="ALT_INIT"/>
    <property type="molecule type" value="mRNA"/>
</dbReference>
<dbReference type="EMBL" id="BC025977">
    <property type="protein sequence ID" value="AAH25977.1"/>
    <property type="status" value="ALT_INIT"/>
    <property type="molecule type" value="mRNA"/>
</dbReference>
<dbReference type="EMBL" id="BC036820">
    <property type="protein sequence ID" value="AAH36820.1"/>
    <property type="status" value="ALT_INIT"/>
    <property type="molecule type" value="mRNA"/>
</dbReference>
<dbReference type="EMBL" id="BC051868">
    <property type="protein sequence ID" value="AAH51868.2"/>
    <property type="status" value="ALT_INIT"/>
    <property type="molecule type" value="mRNA"/>
</dbReference>
<dbReference type="EMBL" id="AL832432">
    <property type="protein sequence ID" value="CAH10644.1"/>
    <property type="molecule type" value="mRNA"/>
</dbReference>
<dbReference type="EMBL" id="AK022940">
    <property type="protein sequence ID" value="BAB14320.1"/>
    <property type="status" value="ALT_INIT"/>
    <property type="molecule type" value="mRNA"/>
</dbReference>
<dbReference type="EMBL" id="AK024657">
    <property type="protein sequence ID" value="BAB14948.1"/>
    <property type="status" value="ALT_INIT"/>
    <property type="molecule type" value="mRNA"/>
</dbReference>
<dbReference type="EMBL" id="AK025999">
    <property type="protein sequence ID" value="BAB15313.1"/>
    <property type="status" value="ALT_INIT"/>
    <property type="molecule type" value="mRNA"/>
</dbReference>
<dbReference type="CCDS" id="CCDS32742.1"/>
<dbReference type="RefSeq" id="NP_071349.3">
    <property type="nucleotide sequence ID" value="NM_022066.3"/>
</dbReference>
<dbReference type="PDB" id="7UN3">
    <property type="method" value="EM"/>
    <property type="resolution" value="3.50 A"/>
    <property type="chains" value="A/D=1-1292"/>
</dbReference>
<dbReference type="PDB" id="7UN6">
    <property type="method" value="EM"/>
    <property type="resolution" value="3.30 A"/>
    <property type="chains" value="A=1-1292"/>
</dbReference>
<dbReference type="PDBsum" id="7UN3"/>
<dbReference type="PDBsum" id="7UN6"/>
<dbReference type="EMDB" id="EMD-26612"/>
<dbReference type="EMDB" id="EMD-26614"/>
<dbReference type="SMR" id="Q9C0C9"/>
<dbReference type="BioGRID" id="121973">
    <property type="interactions" value="818"/>
</dbReference>
<dbReference type="FunCoup" id="Q9C0C9">
    <property type="interactions" value="4237"/>
</dbReference>
<dbReference type="IntAct" id="Q9C0C9">
    <property type="interactions" value="161"/>
</dbReference>
<dbReference type="MINT" id="Q9C0C9"/>
<dbReference type="STRING" id="9606.ENSP00000323687"/>
<dbReference type="ChEMBL" id="CHEMBL4295940"/>
<dbReference type="MoonDB" id="Q9C0C9">
    <property type="type" value="Predicted"/>
</dbReference>
<dbReference type="GlyGen" id="Q9C0C9">
    <property type="glycosylation" value="5 sites, 1 O-linked glycan (4 sites)"/>
</dbReference>
<dbReference type="iPTMnet" id="Q9C0C9"/>
<dbReference type="MetOSite" id="Q9C0C9"/>
<dbReference type="PhosphoSitePlus" id="Q9C0C9"/>
<dbReference type="SwissPalm" id="Q9C0C9"/>
<dbReference type="BioMuta" id="UBE2O"/>
<dbReference type="DMDM" id="209572710"/>
<dbReference type="jPOST" id="Q9C0C9"/>
<dbReference type="MassIVE" id="Q9C0C9"/>
<dbReference type="PaxDb" id="9606-ENSP00000323687"/>
<dbReference type="PeptideAtlas" id="Q9C0C9"/>
<dbReference type="ProteomicsDB" id="80004"/>
<dbReference type="Pumba" id="Q9C0C9"/>
<dbReference type="Antibodypedia" id="32408">
    <property type="antibodies" value="164 antibodies from 35 providers"/>
</dbReference>
<dbReference type="DNASU" id="63893"/>
<dbReference type="Ensembl" id="ENST00000319380.12">
    <property type="protein sequence ID" value="ENSP00000323687.6"/>
    <property type="gene ID" value="ENSG00000175931.13"/>
</dbReference>
<dbReference type="GeneID" id="63893"/>
<dbReference type="KEGG" id="hsa:63893"/>
<dbReference type="MANE-Select" id="ENST00000319380.12">
    <property type="protein sequence ID" value="ENSP00000323687.6"/>
    <property type="RefSeq nucleotide sequence ID" value="NM_022066.4"/>
    <property type="RefSeq protein sequence ID" value="NP_071349.3"/>
</dbReference>
<dbReference type="UCSC" id="uc002jrm.5">
    <property type="organism name" value="human"/>
</dbReference>
<dbReference type="AGR" id="HGNC:29554"/>
<dbReference type="CTD" id="63893"/>
<dbReference type="DisGeNET" id="63893"/>
<dbReference type="GeneCards" id="UBE2O"/>
<dbReference type="HGNC" id="HGNC:29554">
    <property type="gene designation" value="UBE2O"/>
</dbReference>
<dbReference type="HPA" id="ENSG00000175931">
    <property type="expression patterns" value="Low tissue specificity"/>
</dbReference>
<dbReference type="MIM" id="617649">
    <property type="type" value="gene"/>
</dbReference>
<dbReference type="neXtProt" id="NX_Q9C0C9"/>
<dbReference type="OpenTargets" id="ENSG00000175931"/>
<dbReference type="PharmGKB" id="PA142670651"/>
<dbReference type="VEuPathDB" id="HostDB:ENSG00000175931"/>
<dbReference type="eggNOG" id="KOG0895">
    <property type="taxonomic scope" value="Eukaryota"/>
</dbReference>
<dbReference type="GeneTree" id="ENSGT00940000160755"/>
<dbReference type="HOGENOM" id="CLU_002088_1_0_1"/>
<dbReference type="InParanoid" id="Q9C0C9"/>
<dbReference type="OMA" id="WVKGFED"/>
<dbReference type="OrthoDB" id="47801at2759"/>
<dbReference type="PAN-GO" id="Q9C0C9">
    <property type="GO annotations" value="4 GO annotations based on evolutionary models"/>
</dbReference>
<dbReference type="PhylomeDB" id="Q9C0C9"/>
<dbReference type="TreeFam" id="TF325556"/>
<dbReference type="BioCyc" id="MetaCyc:HS10987-MONOMER"/>
<dbReference type="BRENDA" id="2.3.2.24">
    <property type="organism ID" value="2681"/>
</dbReference>
<dbReference type="PathwayCommons" id="Q9C0C9"/>
<dbReference type="Reactome" id="R-HSA-983168">
    <property type="pathway name" value="Antigen processing: Ubiquitination &amp; Proteasome degradation"/>
</dbReference>
<dbReference type="SignaLink" id="Q9C0C9"/>
<dbReference type="SIGNOR" id="Q9C0C9"/>
<dbReference type="UniPathway" id="UPA00143"/>
<dbReference type="BioGRID-ORCS" id="63893">
    <property type="hits" value="68 hits in 1171 CRISPR screens"/>
</dbReference>
<dbReference type="ChiTaRS" id="UBE2O">
    <property type="organism name" value="human"/>
</dbReference>
<dbReference type="GeneWiki" id="UBE2O"/>
<dbReference type="GenomeRNAi" id="63893"/>
<dbReference type="Pharos" id="Q9C0C9">
    <property type="development level" value="Tbio"/>
</dbReference>
<dbReference type="PRO" id="PR:Q9C0C9"/>
<dbReference type="Proteomes" id="UP000005640">
    <property type="component" value="Chromosome 17"/>
</dbReference>
<dbReference type="RNAct" id="Q9C0C9">
    <property type="molecule type" value="protein"/>
</dbReference>
<dbReference type="Bgee" id="ENSG00000175931">
    <property type="expression patterns" value="Expressed in right hemisphere of cerebellum and 152 other cell types or tissues"/>
</dbReference>
<dbReference type="ExpressionAtlas" id="Q9C0C9">
    <property type="expression patterns" value="baseline and differential"/>
</dbReference>
<dbReference type="GO" id="GO:0005737">
    <property type="term" value="C:cytoplasm"/>
    <property type="evidence" value="ECO:0000314"/>
    <property type="project" value="FlyBase"/>
</dbReference>
<dbReference type="GO" id="GO:0005829">
    <property type="term" value="C:cytosol"/>
    <property type="evidence" value="ECO:0007669"/>
    <property type="project" value="GOC"/>
</dbReference>
<dbReference type="GO" id="GO:0016604">
    <property type="term" value="C:nuclear body"/>
    <property type="evidence" value="ECO:0000314"/>
    <property type="project" value="HPA"/>
</dbReference>
<dbReference type="GO" id="GO:0005654">
    <property type="term" value="C:nucleoplasm"/>
    <property type="evidence" value="ECO:0000314"/>
    <property type="project" value="HPA"/>
</dbReference>
<dbReference type="GO" id="GO:0005634">
    <property type="term" value="C:nucleus"/>
    <property type="evidence" value="ECO:0000314"/>
    <property type="project" value="UniProtKB"/>
</dbReference>
<dbReference type="GO" id="GO:0005524">
    <property type="term" value="F:ATP binding"/>
    <property type="evidence" value="ECO:0007669"/>
    <property type="project" value="UniProtKB-KW"/>
</dbReference>
<dbReference type="GO" id="GO:0003723">
    <property type="term" value="F:RNA binding"/>
    <property type="evidence" value="ECO:0007005"/>
    <property type="project" value="UniProtKB"/>
</dbReference>
<dbReference type="GO" id="GO:0061631">
    <property type="term" value="F:ubiquitin conjugating enzyme activity"/>
    <property type="evidence" value="ECO:0000314"/>
    <property type="project" value="MGI"/>
</dbReference>
<dbReference type="GO" id="GO:0061630">
    <property type="term" value="F:ubiquitin protein ligase activity"/>
    <property type="evidence" value="ECO:0000314"/>
    <property type="project" value="MGI"/>
</dbReference>
<dbReference type="GO" id="GO:0004842">
    <property type="term" value="F:ubiquitin-protein transferase activity"/>
    <property type="evidence" value="ECO:0000314"/>
    <property type="project" value="UniProtKB"/>
</dbReference>
<dbReference type="GO" id="GO:0030513">
    <property type="term" value="P:positive regulation of BMP signaling pathway"/>
    <property type="evidence" value="ECO:0000314"/>
    <property type="project" value="UniProtKB"/>
</dbReference>
<dbReference type="GO" id="GO:0070534">
    <property type="term" value="P:protein K63-linked ubiquitination"/>
    <property type="evidence" value="ECO:0000315"/>
    <property type="project" value="UniProtKB"/>
</dbReference>
<dbReference type="GO" id="GO:0006513">
    <property type="term" value="P:protein monoubiquitination"/>
    <property type="evidence" value="ECO:0000314"/>
    <property type="project" value="UniProtKB"/>
</dbReference>
<dbReference type="GO" id="GO:0042147">
    <property type="term" value="P:retrograde transport, endosome to Golgi"/>
    <property type="evidence" value="ECO:0000315"/>
    <property type="project" value="UniProtKB"/>
</dbReference>
<dbReference type="CDD" id="cd23837">
    <property type="entry name" value="UBCc_UBE2O"/>
    <property type="match status" value="1"/>
</dbReference>
<dbReference type="FunFam" id="3.10.110.10:FF:000045">
    <property type="entry name" value="Ubiquitin conjugating enzyme E2 O"/>
    <property type="match status" value="1"/>
</dbReference>
<dbReference type="Gene3D" id="3.10.110.10">
    <property type="entry name" value="Ubiquitin Conjugating Enzyme"/>
    <property type="match status" value="1"/>
</dbReference>
<dbReference type="InterPro" id="IPR000608">
    <property type="entry name" value="UBQ-conjugat_E2_core"/>
</dbReference>
<dbReference type="InterPro" id="IPR016135">
    <property type="entry name" value="UBQ-conjugating_enzyme/RWD"/>
</dbReference>
<dbReference type="PANTHER" id="PTHR46116">
    <property type="entry name" value="(E3-INDEPENDENT) E2 UBIQUITIN-CONJUGATING ENZYME"/>
    <property type="match status" value="1"/>
</dbReference>
<dbReference type="PANTHER" id="PTHR46116:SF15">
    <property type="entry name" value="(E3-INDEPENDENT) E2 UBIQUITIN-CONJUGATING ENZYME"/>
    <property type="match status" value="1"/>
</dbReference>
<dbReference type="Pfam" id="PF23048">
    <property type="entry name" value="SH3-A_UBE2O"/>
    <property type="match status" value="1"/>
</dbReference>
<dbReference type="Pfam" id="PF23043">
    <property type="entry name" value="SH3-B_UBE2O"/>
    <property type="match status" value="1"/>
</dbReference>
<dbReference type="Pfam" id="PF23044">
    <property type="entry name" value="SH3-C_UBE2O"/>
    <property type="match status" value="1"/>
</dbReference>
<dbReference type="Pfam" id="PF23046">
    <property type="entry name" value="tSH3-B_UBE2O"/>
    <property type="match status" value="1"/>
</dbReference>
<dbReference type="Pfam" id="PF00179">
    <property type="entry name" value="UQ_con"/>
    <property type="match status" value="1"/>
</dbReference>
<dbReference type="SMART" id="SM00212">
    <property type="entry name" value="UBCc"/>
    <property type="match status" value="1"/>
</dbReference>
<dbReference type="SUPFAM" id="SSF54495">
    <property type="entry name" value="UBC-like"/>
    <property type="match status" value="1"/>
</dbReference>
<dbReference type="PROSITE" id="PS50127">
    <property type="entry name" value="UBC_2"/>
    <property type="match status" value="1"/>
</dbReference>
<proteinExistence type="evidence at protein level"/>
<feature type="chain" id="PRO_0000280637" description="(E3-independent) E2 ubiquitin-conjugating enzyme">
    <location>
        <begin position="1"/>
        <end position="1292"/>
    </location>
</feature>
<feature type="domain" description="UBC core" evidence="3">
    <location>
        <begin position="953"/>
        <end position="1113"/>
    </location>
</feature>
<feature type="region of interest" description="Disordered" evidence="4">
    <location>
        <begin position="1"/>
        <end position="56"/>
    </location>
</feature>
<feature type="region of interest" description="Disordered" evidence="4">
    <location>
        <begin position="85"/>
        <end position="114"/>
    </location>
</feature>
<feature type="region of interest" description="Disordered" evidence="4">
    <location>
        <begin position="401"/>
        <end position="459"/>
    </location>
</feature>
<feature type="region of interest" description="Disordered" evidence="4">
    <location>
        <begin position="472"/>
        <end position="519"/>
    </location>
</feature>
<feature type="region of interest" description="Disordered" evidence="4">
    <location>
        <begin position="714"/>
        <end position="746"/>
    </location>
</feature>
<feature type="region of interest" description="Disordered" evidence="4">
    <location>
        <begin position="882"/>
        <end position="903"/>
    </location>
</feature>
<feature type="region of interest" description="Disordered" evidence="4">
    <location>
        <begin position="1160"/>
        <end position="1248"/>
    </location>
</feature>
<feature type="coiled-coil region" evidence="2">
    <location>
        <begin position="812"/>
        <end position="882"/>
    </location>
</feature>
<feature type="short sequence motif" description="Nuclear localization signal" evidence="13">
    <location>
        <begin position="512"/>
        <end position="536"/>
    </location>
</feature>
<feature type="compositionally biased region" description="Pro residues" evidence="4">
    <location>
        <begin position="1"/>
        <end position="37"/>
    </location>
</feature>
<feature type="compositionally biased region" description="Low complexity" evidence="4">
    <location>
        <begin position="38"/>
        <end position="56"/>
    </location>
</feature>
<feature type="compositionally biased region" description="Basic and acidic residues" evidence="4">
    <location>
        <begin position="406"/>
        <end position="427"/>
    </location>
</feature>
<feature type="compositionally biased region" description="Acidic residues" evidence="4">
    <location>
        <begin position="478"/>
        <end position="490"/>
    </location>
</feature>
<feature type="compositionally biased region" description="Low complexity" evidence="4">
    <location>
        <begin position="491"/>
        <end position="510"/>
    </location>
</feature>
<feature type="compositionally biased region" description="Acidic residues" evidence="4">
    <location>
        <begin position="732"/>
        <end position="742"/>
    </location>
</feature>
<feature type="compositionally biased region" description="Basic and acidic residues" evidence="4">
    <location>
        <begin position="882"/>
        <end position="893"/>
    </location>
</feature>
<feature type="active site" description="Glycyl thioester intermediate" evidence="3">
    <location>
        <position position="1040"/>
    </location>
</feature>
<feature type="modified residue" description="Phosphoserine" evidence="20">
    <location>
        <position position="50"/>
    </location>
</feature>
<feature type="modified residue" description="Phosphoserine" evidence="16 17 18 19 20">
    <location>
        <position position="87"/>
    </location>
</feature>
<feature type="modified residue" description="Phosphoserine" evidence="17 18 19 20">
    <location>
        <position position="89"/>
    </location>
</feature>
<feature type="modified residue" description="Phosphoserine" evidence="15 19">
    <location>
        <position position="399"/>
    </location>
</feature>
<feature type="modified residue" description="Phosphoserine" evidence="15 19">
    <location>
        <position position="401"/>
    </location>
</feature>
<feature type="modified residue" description="Phosphoserine" evidence="15">
    <location>
        <position position="441"/>
    </location>
</feature>
<feature type="modified residue" description="Phosphothreonine" evidence="20">
    <location>
        <position position="488"/>
    </location>
</feature>
<feature type="modified residue" description="Phosphothreonine" evidence="20">
    <location>
        <position position="491"/>
    </location>
</feature>
<feature type="modified residue" description="Phosphoserine" evidence="19">
    <location>
        <position position="515"/>
    </location>
</feature>
<feature type="modified residue" description="Phosphoserine" evidence="15 16 19">
    <location>
        <position position="836"/>
    </location>
</feature>
<feature type="modified residue" description="Phosphothreonine" evidence="1">
    <location>
        <position position="838"/>
    </location>
</feature>
<feature type="modified residue" description="Phosphoserine" evidence="1">
    <location>
        <position position="839"/>
    </location>
</feature>
<feature type="modified residue" description="Phosphoserine" evidence="18 19">
    <location>
        <position position="896"/>
    </location>
</feature>
<feature type="sequence variant" id="VAR_031184" description="In dbSNP:rs3803739." evidence="5 7 8 9">
    <original>G</original>
    <variation>S</variation>
    <location>
        <position position="1207"/>
    </location>
</feature>
<feature type="mutagenesis site" description="Loss of function." evidence="12 13">
    <original>C</original>
    <variation>S</variation>
    <location>
        <position position="1040"/>
    </location>
</feature>
<feature type="sequence conflict" description="In Ref. 1; BAB21825." evidence="14" ref="1">
    <original>S</original>
    <variation>F</variation>
    <location>
        <position position="50"/>
    </location>
</feature>
<feature type="sequence conflict" description="In Ref. 6; BAB15313." evidence="14" ref="6">
    <original>E</original>
    <variation>EQ</variation>
    <location>
        <position position="675"/>
    </location>
</feature>
<feature type="sequence conflict" description="In Ref. 4; AAH22237." evidence="14" ref="4">
    <original>W</original>
    <variation>C</variation>
    <location>
        <position position="1047"/>
    </location>
</feature>
<feature type="sequence conflict" description="In Ref. 4; AAH25977." evidence="14" ref="4">
    <original>E</original>
    <variation>D</variation>
    <location>
        <position position="1143"/>
    </location>
</feature>
<feature type="sequence conflict" description="In Ref. 6; BAB14320." evidence="14" ref="6">
    <original>A</original>
    <variation>T</variation>
    <location>
        <position position="1150"/>
    </location>
</feature>
<feature type="sequence conflict" description="In Ref. 6; BAB14320." evidence="14" ref="6">
    <original>L</original>
    <variation>P</variation>
    <location>
        <position position="1261"/>
    </location>
</feature>
<feature type="sequence conflict" description="In Ref. 6; BAB14948." evidence="14" ref="6">
    <original>E</original>
    <variation>G</variation>
    <location>
        <position position="1290"/>
    </location>
</feature>
<feature type="strand" evidence="22">
    <location>
        <begin position="65"/>
        <end position="79"/>
    </location>
</feature>
<feature type="strand" evidence="22">
    <location>
        <begin position="123"/>
        <end position="129"/>
    </location>
</feature>
<feature type="strand" evidence="21">
    <location>
        <begin position="132"/>
        <end position="134"/>
    </location>
</feature>
<feature type="turn" evidence="22">
    <location>
        <begin position="137"/>
        <end position="139"/>
    </location>
</feature>
<feature type="strand" evidence="22">
    <location>
        <begin position="140"/>
        <end position="144"/>
    </location>
</feature>
<feature type="strand" evidence="22">
    <location>
        <begin position="152"/>
        <end position="159"/>
    </location>
</feature>
<feature type="strand" evidence="22">
    <location>
        <begin position="163"/>
        <end position="177"/>
    </location>
</feature>
<feature type="strand" evidence="22">
    <location>
        <begin position="183"/>
        <end position="188"/>
    </location>
</feature>
<feature type="helix" evidence="22">
    <location>
        <begin position="189"/>
        <end position="191"/>
    </location>
</feature>
<feature type="strand" evidence="22">
    <location>
        <begin position="195"/>
        <end position="197"/>
    </location>
</feature>
<feature type="strand" evidence="22">
    <location>
        <begin position="203"/>
        <end position="205"/>
    </location>
</feature>
<feature type="strand" evidence="22">
    <location>
        <begin position="210"/>
        <end position="224"/>
    </location>
</feature>
<feature type="strand" evidence="22">
    <location>
        <begin position="229"/>
        <end position="233"/>
    </location>
</feature>
<feature type="helix" evidence="22">
    <location>
        <begin position="234"/>
        <end position="237"/>
    </location>
</feature>
<feature type="strand" evidence="22">
    <location>
        <begin position="265"/>
        <end position="269"/>
    </location>
</feature>
<feature type="helix" evidence="22">
    <location>
        <begin position="270"/>
        <end position="274"/>
    </location>
</feature>
<feature type="strand" evidence="22">
    <location>
        <begin position="275"/>
        <end position="281"/>
    </location>
</feature>
<feature type="strand" evidence="22">
    <location>
        <begin position="288"/>
        <end position="306"/>
    </location>
</feature>
<feature type="strand" evidence="22">
    <location>
        <begin position="326"/>
        <end position="328"/>
    </location>
</feature>
<feature type="helix" evidence="22">
    <location>
        <begin position="330"/>
        <end position="333"/>
    </location>
</feature>
<feature type="helix" evidence="22">
    <location>
        <begin position="340"/>
        <end position="342"/>
    </location>
</feature>
<feature type="strand" evidence="22">
    <location>
        <begin position="352"/>
        <end position="356"/>
    </location>
</feature>
<feature type="strand" evidence="22">
    <location>
        <begin position="543"/>
        <end position="559"/>
    </location>
</feature>
<feature type="strand" evidence="22">
    <location>
        <begin position="564"/>
        <end position="569"/>
    </location>
</feature>
<feature type="helix" evidence="22">
    <location>
        <begin position="570"/>
        <end position="572"/>
    </location>
</feature>
<feature type="strand" evidence="22">
    <location>
        <begin position="573"/>
        <end position="575"/>
    </location>
</feature>
<feature type="strand" evidence="22">
    <location>
        <begin position="589"/>
        <end position="592"/>
    </location>
</feature>
<feature type="strand" evidence="22">
    <location>
        <begin position="595"/>
        <end position="597"/>
    </location>
</feature>
<feature type="strand" evidence="22">
    <location>
        <begin position="601"/>
        <end position="611"/>
    </location>
</feature>
<feature type="turn" evidence="22">
    <location>
        <begin position="612"/>
        <end position="615"/>
    </location>
</feature>
<feature type="strand" evidence="22">
    <location>
        <begin position="616"/>
        <end position="624"/>
    </location>
</feature>
<feature type="strand" evidence="22">
    <location>
        <begin position="626"/>
        <end position="629"/>
    </location>
</feature>
<feature type="strand" evidence="22">
    <location>
        <begin position="631"/>
        <end position="635"/>
    </location>
</feature>
<feature type="strand" evidence="22">
    <location>
        <begin position="639"/>
        <end position="641"/>
    </location>
</feature>
<feature type="helix" evidence="22">
    <location>
        <begin position="642"/>
        <end position="644"/>
    </location>
</feature>
<feature type="strand" evidence="22">
    <location>
        <begin position="645"/>
        <end position="647"/>
    </location>
</feature>
<feature type="strand" evidence="22">
    <location>
        <begin position="657"/>
        <end position="661"/>
    </location>
</feature>
<feature type="strand" evidence="21">
    <location>
        <begin position="678"/>
        <end position="684"/>
    </location>
</feature>
<feature type="strand" evidence="21">
    <location>
        <begin position="686"/>
        <end position="688"/>
    </location>
</feature>
<feature type="strand" evidence="22">
    <location>
        <begin position="694"/>
        <end position="697"/>
    </location>
</feature>
<feature type="strand" evidence="21">
    <location>
        <begin position="698"/>
        <end position="702"/>
    </location>
</feature>
<feature type="helix" evidence="22">
    <location>
        <begin position="704"/>
        <end position="706"/>
    </location>
</feature>
<feature type="strand" evidence="22">
    <location>
        <begin position="707"/>
        <end position="709"/>
    </location>
</feature>
<feature type="strand" evidence="22">
    <location>
        <begin position="931"/>
        <end position="934"/>
    </location>
</feature>
<feature type="helix" evidence="22">
    <location>
        <begin position="951"/>
        <end position="967"/>
    </location>
</feature>
<feature type="strand" evidence="22">
    <location>
        <begin position="971"/>
        <end position="979"/>
    </location>
</feature>
<feature type="turn" evidence="22">
    <location>
        <begin position="980"/>
        <end position="983"/>
    </location>
</feature>
<feature type="strand" evidence="22">
    <location>
        <begin position="984"/>
        <end position="991"/>
    </location>
</feature>
<feature type="strand" evidence="21">
    <location>
        <begin position="993"/>
        <end position="995"/>
    </location>
</feature>
<feature type="strand" evidence="22">
    <location>
        <begin position="999"/>
        <end position="1007"/>
    </location>
</feature>
<feature type="turn" evidence="22">
    <location>
        <begin position="1010"/>
        <end position="1013"/>
    </location>
</feature>
<feature type="strand" evidence="22">
    <location>
        <begin position="1018"/>
        <end position="1021"/>
    </location>
</feature>
<feature type="strand" evidence="22">
    <location>
        <begin position="1024"/>
        <end position="1027"/>
    </location>
</feature>
<feature type="strand" evidence="22">
    <location>
        <begin position="1029"/>
        <end position="1033"/>
    </location>
</feature>
<feature type="turn" evidence="22">
    <location>
        <begin position="1042"/>
        <end position="1045"/>
    </location>
</feature>
<feature type="helix" evidence="22">
    <location>
        <begin position="1061"/>
        <end position="1070"/>
    </location>
</feature>
<feature type="strand" evidence="22">
    <location>
        <begin position="1078"/>
        <end position="1083"/>
    </location>
</feature>
<feature type="helix" evidence="22">
    <location>
        <begin position="1084"/>
        <end position="1087"/>
    </location>
</feature>
<feature type="helix" evidence="22">
    <location>
        <begin position="1091"/>
        <end position="1117"/>
    </location>
</feature>
<feature type="turn" evidence="22">
    <location>
        <begin position="1121"/>
        <end position="1123"/>
    </location>
</feature>
<feature type="helix" evidence="22">
    <location>
        <begin position="1124"/>
        <end position="1145"/>
    </location>
</feature>
<feature type="strand" evidence="21">
    <location>
        <begin position="1255"/>
        <end position="1257"/>
    </location>
</feature>
<feature type="helix" evidence="22">
    <location>
        <begin position="1263"/>
        <end position="1282"/>
    </location>
</feature>
<evidence type="ECO:0000250" key="1">
    <source>
        <dbReference type="UniProtKB" id="Q6ZPJ3"/>
    </source>
</evidence>
<evidence type="ECO:0000255" key="2"/>
<evidence type="ECO:0000255" key="3">
    <source>
        <dbReference type="PROSITE-ProRule" id="PRU00388"/>
    </source>
</evidence>
<evidence type="ECO:0000256" key="4">
    <source>
        <dbReference type="SAM" id="MobiDB-lite"/>
    </source>
</evidence>
<evidence type="ECO:0000269" key="5">
    <source>
    </source>
</evidence>
<evidence type="ECO:0000269" key="6">
    <source>
    </source>
</evidence>
<evidence type="ECO:0000269" key="7">
    <source>
    </source>
</evidence>
<evidence type="ECO:0000269" key="8">
    <source>
    </source>
</evidence>
<evidence type="ECO:0000269" key="9">
    <source>
    </source>
</evidence>
<evidence type="ECO:0000269" key="10">
    <source>
    </source>
</evidence>
<evidence type="ECO:0000269" key="11">
    <source>
    </source>
</evidence>
<evidence type="ECO:0000269" key="12">
    <source>
    </source>
</evidence>
<evidence type="ECO:0000269" key="13">
    <source>
    </source>
</evidence>
<evidence type="ECO:0000305" key="14"/>
<evidence type="ECO:0007744" key="15">
    <source>
    </source>
</evidence>
<evidence type="ECO:0007744" key="16">
    <source>
    </source>
</evidence>
<evidence type="ECO:0007744" key="17">
    <source>
    </source>
</evidence>
<evidence type="ECO:0007744" key="18">
    <source>
    </source>
</evidence>
<evidence type="ECO:0007744" key="19">
    <source>
    </source>
</evidence>
<evidence type="ECO:0007744" key="20">
    <source>
    </source>
</evidence>
<evidence type="ECO:0007829" key="21">
    <source>
        <dbReference type="PDB" id="7UN3"/>
    </source>
</evidence>
<evidence type="ECO:0007829" key="22">
    <source>
        <dbReference type="PDB" id="7UN6"/>
    </source>
</evidence>